<feature type="chain" id="PRO_0000455034" description="Protein OXIDATIVE STRESS 3 LIKE 3">
    <location>
        <begin position="1"/>
        <end position="156"/>
    </location>
</feature>
<feature type="region of interest" description="Disordered" evidence="2">
    <location>
        <begin position="1"/>
        <end position="67"/>
    </location>
</feature>
<feature type="compositionally biased region" description="Basic and acidic residues" evidence="2">
    <location>
        <begin position="13"/>
        <end position="26"/>
    </location>
</feature>
<feature type="sequence conflict" description="In Ref. 4; AAM60862." evidence="5" ref="4">
    <original>A</original>
    <variation>S</variation>
    <location>
        <position position="29"/>
    </location>
</feature>
<sequence>MHYQEQMESLMLGEERRRGNYTRDVDADADEGVNSPSSFPNSPDDSDRRSSSSSSRRGLSKHYKGKSQSFTTLAEALTVEDLAKPENPFNAKLKQRRESPHCRRLSGCGGASERNLSVHDVFLAGNDRPPRLSGNRPPPRAQTLSAAHISALLTRT</sequence>
<evidence type="ECO:0000250" key="1">
    <source>
        <dbReference type="UniProtKB" id="Q9LVB9"/>
    </source>
</evidence>
<evidence type="ECO:0000256" key="2">
    <source>
        <dbReference type="SAM" id="MobiDB-lite"/>
    </source>
</evidence>
<evidence type="ECO:0000269" key="3">
    <source>
    </source>
</evidence>
<evidence type="ECO:0000303" key="4">
    <source>
    </source>
</evidence>
<evidence type="ECO:0000305" key="5"/>
<evidence type="ECO:0000312" key="6">
    <source>
        <dbReference type="Araport" id="AT3G03170"/>
    </source>
</evidence>
<evidence type="ECO:0000312" key="7">
    <source>
        <dbReference type="EMBL" id="AAF26108.1"/>
    </source>
</evidence>
<protein>
    <recommendedName>
        <fullName evidence="4">Protein OXIDATIVE STRESS 3 LIKE 3</fullName>
        <shortName evidence="4">AtO3L3</shortName>
    </recommendedName>
</protein>
<comment type="function">
    <text evidence="3">Promotes slightly the tolerance to oxidizing chemicals (e.g. diamide).</text>
</comment>
<comment type="subcellular location">
    <subcellularLocation>
        <location evidence="1">Nucleus</location>
    </subcellularLocation>
</comment>
<comment type="sequence caution" evidence="5">
    <conflict type="erroneous initiation">
        <sequence resource="EMBL-CDS" id="AAF26108"/>
    </conflict>
    <text>Truncated N-terminus.</text>
</comment>
<accession>Q29PZ2</accession>
<accession>A0A178VKR0</accession>
<accession>Q8LGH0</accession>
<accession>Q9M9N6</accession>
<proteinExistence type="evidence at transcript level"/>
<keyword id="KW-0539">Nucleus</keyword>
<keyword id="KW-1185">Reference proteome</keyword>
<keyword id="KW-0346">Stress response</keyword>
<gene>
    <name evidence="4" type="primary">O3L3</name>
    <name evidence="6" type="ordered locus">At3g03170</name>
    <name evidence="7" type="ORF">T17B22.14</name>
</gene>
<reference key="1">
    <citation type="journal article" date="2000" name="Nature">
        <title>Sequence and analysis of chromosome 3 of the plant Arabidopsis thaliana.</title>
        <authorList>
            <person name="Salanoubat M."/>
            <person name="Lemcke K."/>
            <person name="Rieger M."/>
            <person name="Ansorge W."/>
            <person name="Unseld M."/>
            <person name="Fartmann B."/>
            <person name="Valle G."/>
            <person name="Bloecker H."/>
            <person name="Perez-Alonso M."/>
            <person name="Obermaier B."/>
            <person name="Delseny M."/>
            <person name="Boutry M."/>
            <person name="Grivell L.A."/>
            <person name="Mache R."/>
            <person name="Puigdomenech P."/>
            <person name="De Simone V."/>
            <person name="Choisne N."/>
            <person name="Artiguenave F."/>
            <person name="Robert C."/>
            <person name="Brottier P."/>
            <person name="Wincker P."/>
            <person name="Cattolico L."/>
            <person name="Weissenbach J."/>
            <person name="Saurin W."/>
            <person name="Quetier F."/>
            <person name="Schaefer M."/>
            <person name="Mueller-Auer S."/>
            <person name="Gabel C."/>
            <person name="Fuchs M."/>
            <person name="Benes V."/>
            <person name="Wurmbach E."/>
            <person name="Drzonek H."/>
            <person name="Erfle H."/>
            <person name="Jordan N."/>
            <person name="Bangert S."/>
            <person name="Wiedelmann R."/>
            <person name="Kranz H."/>
            <person name="Voss H."/>
            <person name="Holland R."/>
            <person name="Brandt P."/>
            <person name="Nyakatura G."/>
            <person name="Vezzi A."/>
            <person name="D'Angelo M."/>
            <person name="Pallavicini A."/>
            <person name="Toppo S."/>
            <person name="Simionati B."/>
            <person name="Conrad A."/>
            <person name="Hornischer K."/>
            <person name="Kauer G."/>
            <person name="Loehnert T.-H."/>
            <person name="Nordsiek G."/>
            <person name="Reichelt J."/>
            <person name="Scharfe M."/>
            <person name="Schoen O."/>
            <person name="Bargues M."/>
            <person name="Terol J."/>
            <person name="Climent J."/>
            <person name="Navarro P."/>
            <person name="Collado C."/>
            <person name="Perez-Perez A."/>
            <person name="Ottenwaelder B."/>
            <person name="Duchemin D."/>
            <person name="Cooke R."/>
            <person name="Laudie M."/>
            <person name="Berger-Llauro C."/>
            <person name="Purnelle B."/>
            <person name="Masuy D."/>
            <person name="de Haan M."/>
            <person name="Maarse A.C."/>
            <person name="Alcaraz J.-P."/>
            <person name="Cottet A."/>
            <person name="Casacuberta E."/>
            <person name="Monfort A."/>
            <person name="Argiriou A."/>
            <person name="Flores M."/>
            <person name="Liguori R."/>
            <person name="Vitale D."/>
            <person name="Mannhaupt G."/>
            <person name="Haase D."/>
            <person name="Schoof H."/>
            <person name="Rudd S."/>
            <person name="Zaccaria P."/>
            <person name="Mewes H.-W."/>
            <person name="Mayer K.F.X."/>
            <person name="Kaul S."/>
            <person name="Town C.D."/>
            <person name="Koo H.L."/>
            <person name="Tallon L.J."/>
            <person name="Jenkins J."/>
            <person name="Rooney T."/>
            <person name="Rizzo M."/>
            <person name="Walts A."/>
            <person name="Utterback T."/>
            <person name="Fujii C.Y."/>
            <person name="Shea T.P."/>
            <person name="Creasy T.H."/>
            <person name="Haas B."/>
            <person name="Maiti R."/>
            <person name="Wu D."/>
            <person name="Peterson J."/>
            <person name="Van Aken S."/>
            <person name="Pai G."/>
            <person name="Militscher J."/>
            <person name="Sellers P."/>
            <person name="Gill J.E."/>
            <person name="Feldblyum T.V."/>
            <person name="Preuss D."/>
            <person name="Lin X."/>
            <person name="Nierman W.C."/>
            <person name="Salzberg S.L."/>
            <person name="White O."/>
            <person name="Venter J.C."/>
            <person name="Fraser C.M."/>
            <person name="Kaneko T."/>
            <person name="Nakamura Y."/>
            <person name="Sato S."/>
            <person name="Kato T."/>
            <person name="Asamizu E."/>
            <person name="Sasamoto S."/>
            <person name="Kimura T."/>
            <person name="Idesawa K."/>
            <person name="Kawashima K."/>
            <person name="Kishida Y."/>
            <person name="Kiyokawa C."/>
            <person name="Kohara M."/>
            <person name="Matsumoto M."/>
            <person name="Matsuno A."/>
            <person name="Muraki A."/>
            <person name="Nakayama S."/>
            <person name="Nakazaki N."/>
            <person name="Shinpo S."/>
            <person name="Takeuchi C."/>
            <person name="Wada T."/>
            <person name="Watanabe A."/>
            <person name="Yamada M."/>
            <person name="Yasuda M."/>
            <person name="Tabata S."/>
        </authorList>
    </citation>
    <scope>NUCLEOTIDE SEQUENCE [LARGE SCALE GENOMIC DNA]</scope>
    <source>
        <strain>cv. Columbia</strain>
    </source>
</reference>
<reference key="2">
    <citation type="journal article" date="2017" name="Plant J.">
        <title>Araport11: a complete reannotation of the Arabidopsis thaliana reference genome.</title>
        <authorList>
            <person name="Cheng C.Y."/>
            <person name="Krishnakumar V."/>
            <person name="Chan A.P."/>
            <person name="Thibaud-Nissen F."/>
            <person name="Schobel S."/>
            <person name="Town C.D."/>
        </authorList>
    </citation>
    <scope>GENOME REANNOTATION</scope>
    <source>
        <strain>cv. Columbia</strain>
    </source>
</reference>
<reference key="3">
    <citation type="submission" date="2006-03" db="EMBL/GenBank/DDBJ databases">
        <title>Arabidopsis ORF clones.</title>
        <authorList>
            <person name="Shinn P."/>
            <person name="Chen H."/>
            <person name="Kim C.J."/>
            <person name="Ecker J.R."/>
        </authorList>
    </citation>
    <scope>NUCLEOTIDE SEQUENCE [LARGE SCALE MRNA]</scope>
    <source>
        <strain>cv. Columbia</strain>
    </source>
</reference>
<reference key="4">
    <citation type="submission" date="2002-03" db="EMBL/GenBank/DDBJ databases">
        <title>Full-length cDNA from Arabidopsis thaliana.</title>
        <authorList>
            <person name="Brover V.V."/>
            <person name="Troukhan M.E."/>
            <person name="Alexandrov N.A."/>
            <person name="Lu Y.-P."/>
            <person name="Flavell R.B."/>
            <person name="Feldmann K.A."/>
        </authorList>
    </citation>
    <scope>NUCLEOTIDE SEQUENCE [LARGE SCALE MRNA]</scope>
</reference>
<reference key="5">
    <citation type="journal article" date="2009" name="Plant J.">
        <title>OXIDATIVE STRESS 3 is a chromatin-associated factor involved in tolerance to heavy metals and oxidative stress.</title>
        <authorList>
            <person name="Blanvillain R."/>
            <person name="Kim J.H."/>
            <person name="Wu S."/>
            <person name="Lima A."/>
            <person name="Ow D.W."/>
        </authorList>
    </citation>
    <scope>FUNCTION</scope>
    <scope>GENE FAMILY</scope>
    <scope>NOMENCLATURE</scope>
    <source>
        <strain>cv. Landsberg erecta</strain>
        <strain>cv. Wassilewskija</strain>
    </source>
</reference>
<name>O3L3_ARATH</name>
<dbReference type="EMBL" id="AC012328">
    <property type="protein sequence ID" value="AAF26108.1"/>
    <property type="status" value="ALT_INIT"/>
    <property type="molecule type" value="Genomic_DNA"/>
</dbReference>
<dbReference type="EMBL" id="CP002686">
    <property type="protein sequence ID" value="AEE73909.1"/>
    <property type="molecule type" value="Genomic_DNA"/>
</dbReference>
<dbReference type="EMBL" id="BT024764">
    <property type="protein sequence ID" value="ABD59102.1"/>
    <property type="molecule type" value="mRNA"/>
</dbReference>
<dbReference type="EMBL" id="AY084271">
    <property type="protein sequence ID" value="AAM60862.1"/>
    <property type="molecule type" value="mRNA"/>
</dbReference>
<dbReference type="RefSeq" id="NP_566196.1">
    <property type="nucleotide sequence ID" value="NM_111187.3"/>
</dbReference>
<dbReference type="IntAct" id="Q29PZ2">
    <property type="interactions" value="5"/>
</dbReference>
<dbReference type="STRING" id="3702.Q29PZ2"/>
<dbReference type="PaxDb" id="3702-AT3G03170.1"/>
<dbReference type="ProteomicsDB" id="177667"/>
<dbReference type="EnsemblPlants" id="AT3G03170.1">
    <property type="protein sequence ID" value="AT3G03170.1"/>
    <property type="gene ID" value="AT3G03170"/>
</dbReference>
<dbReference type="GeneID" id="821064"/>
<dbReference type="Gramene" id="AT3G03170.1">
    <property type="protein sequence ID" value="AT3G03170.1"/>
    <property type="gene ID" value="AT3G03170"/>
</dbReference>
<dbReference type="KEGG" id="ath:AT3G03170"/>
<dbReference type="Araport" id="AT3G03170"/>
<dbReference type="TAIR" id="AT3G03170"/>
<dbReference type="eggNOG" id="KOG4210">
    <property type="taxonomic scope" value="Eukaryota"/>
</dbReference>
<dbReference type="HOGENOM" id="CLU_1671715_0_0_1"/>
<dbReference type="InParanoid" id="Q29PZ2"/>
<dbReference type="OMA" id="QRRENTH"/>
<dbReference type="OrthoDB" id="1938584at2759"/>
<dbReference type="PhylomeDB" id="Q29PZ2"/>
<dbReference type="PRO" id="PR:Q29PZ2"/>
<dbReference type="Proteomes" id="UP000006548">
    <property type="component" value="Chromosome 3"/>
</dbReference>
<dbReference type="ExpressionAtlas" id="Q29PZ2">
    <property type="expression patterns" value="baseline and differential"/>
</dbReference>
<dbReference type="GO" id="GO:0005634">
    <property type="term" value="C:nucleus"/>
    <property type="evidence" value="ECO:0007669"/>
    <property type="project" value="UniProtKB-SubCell"/>
</dbReference>
<dbReference type="GO" id="GO:0006979">
    <property type="term" value="P:response to oxidative stress"/>
    <property type="evidence" value="ECO:0000315"/>
    <property type="project" value="UniProtKB"/>
</dbReference>
<dbReference type="InterPro" id="IPR051992">
    <property type="entry name" value="OxStress_Response_Reg"/>
</dbReference>
<dbReference type="PANTHER" id="PTHR33172">
    <property type="entry name" value="OS08G0516900 PROTEIN"/>
    <property type="match status" value="1"/>
</dbReference>
<dbReference type="PANTHER" id="PTHR33172:SF96">
    <property type="entry name" value="PROTEIN OXIDATIVE STRESS 3 LIKE 3"/>
    <property type="match status" value="1"/>
</dbReference>
<organism>
    <name type="scientific">Arabidopsis thaliana</name>
    <name type="common">Mouse-ear cress</name>
    <dbReference type="NCBI Taxonomy" id="3702"/>
    <lineage>
        <taxon>Eukaryota</taxon>
        <taxon>Viridiplantae</taxon>
        <taxon>Streptophyta</taxon>
        <taxon>Embryophyta</taxon>
        <taxon>Tracheophyta</taxon>
        <taxon>Spermatophyta</taxon>
        <taxon>Magnoliopsida</taxon>
        <taxon>eudicotyledons</taxon>
        <taxon>Gunneridae</taxon>
        <taxon>Pentapetalae</taxon>
        <taxon>rosids</taxon>
        <taxon>malvids</taxon>
        <taxon>Brassicales</taxon>
        <taxon>Brassicaceae</taxon>
        <taxon>Camelineae</taxon>
        <taxon>Arabidopsis</taxon>
    </lineage>
</organism>